<feature type="chain" id="PRO_0000115095" description="DNA mismatch repair protein MutS">
    <location>
        <begin position="1"/>
        <end position="853"/>
    </location>
</feature>
<feature type="binding site" evidence="1">
    <location>
        <begin position="614"/>
        <end position="621"/>
    </location>
    <ligand>
        <name>ATP</name>
        <dbReference type="ChEBI" id="CHEBI:30616"/>
    </ligand>
</feature>
<keyword id="KW-0067">ATP-binding</keyword>
<keyword id="KW-0227">DNA damage</keyword>
<keyword id="KW-0234">DNA repair</keyword>
<keyword id="KW-0238">DNA-binding</keyword>
<keyword id="KW-0547">Nucleotide-binding</keyword>
<keyword id="KW-1185">Reference proteome</keyword>
<sequence>MSTIENFDAHTPMMQQYLKLKAQHPEILLFYRMGDFYELFYDDAKRASQLLDISLTKRGASAGEPIPMAGIPYHAVENYLAKLVNQGESVAICEQIGDPATSKGPVERKVVRIVTPGTISDEALLQERQDNLLAAIWQDSKGFGYATLDISSGRFRLSEPADRETMAAELQRTNPAELLYAEDFAEMSLIEGRRGLRRRPLWEFEIDTARQQLNLQFGTRDLVGFGVENAPRGLCAAGCLLQYAKDTQRTTLPHIRSITMERQQDSIIMDAATRRNLEITQNLAGGAENTLASVLDCTVTPMGSRMLKRWLHMPVRDTRVLLERQQTIGALQDFTAELQPVLRQVGDLERILARLALRTARPRDLARMRHAFQQLPELRAQLENVDSAPVQALREKMGEFAELRDLLERAIIDTPPVLVRDGGVIASGYNEELDEWRALADGATDYLERLEVRERERTGLDTLKVGFNAVHGYYIQISRGQSHLAPINYMRRQTLKNAERYIIPELKEYEDKVLTSKGKALALEKQLYEELFDLLLPHLEALQQSASALAELDVLVNLAERAYTLNYTCPTFIDKPGIRITEGRHPVVEQVLNEPFIANPLNLSPQRRMLIITGPNMGGKSTYMRQTALIALMAYIGSYVPAQKVEIGPIDRIFTRVGAADDLASGRSTFMVEMTETANILHNATEYSLVLMDEIGRGTSTYDGLSLAWACAENLANKIKALTLFATHYFELTQLPEKMEGVANVHLDALEHGDTIAFMHSVQDGAASKSYGLAVAALAGVPKEVIKRARQKLRELESISPNAAATQVDGTQMSLLSVPEETSPAVEALENLDPDSLTPRQALEWIYRLKSLV</sequence>
<evidence type="ECO:0000255" key="1">
    <source>
        <dbReference type="HAMAP-Rule" id="MF_00096"/>
    </source>
</evidence>
<protein>
    <recommendedName>
        <fullName evidence="1">DNA mismatch repair protein MutS</fullName>
    </recommendedName>
</protein>
<proteinExistence type="inferred from homology"/>
<comment type="function">
    <text evidence="1">This protein is involved in the repair of mismatches in DNA. It is possible that it carries out the mismatch recognition step. This protein has a weak ATPase activity.</text>
</comment>
<comment type="similarity">
    <text evidence="1">Belongs to the DNA mismatch repair MutS family.</text>
</comment>
<gene>
    <name evidence="1" type="primary">mutS</name>
    <name type="ordered locus">c3294</name>
</gene>
<reference key="1">
    <citation type="journal article" date="2002" name="Proc. Natl. Acad. Sci. U.S.A.">
        <title>Extensive mosaic structure revealed by the complete genome sequence of uropathogenic Escherichia coli.</title>
        <authorList>
            <person name="Welch R.A."/>
            <person name="Burland V."/>
            <person name="Plunkett G. III"/>
            <person name="Redford P."/>
            <person name="Roesch P."/>
            <person name="Rasko D."/>
            <person name="Buckles E.L."/>
            <person name="Liou S.-R."/>
            <person name="Boutin A."/>
            <person name="Hackett J."/>
            <person name="Stroud D."/>
            <person name="Mayhew G.F."/>
            <person name="Rose D.J."/>
            <person name="Zhou S."/>
            <person name="Schwartz D.C."/>
            <person name="Perna N.T."/>
            <person name="Mobley H.L.T."/>
            <person name="Donnenberg M.S."/>
            <person name="Blattner F.R."/>
        </authorList>
    </citation>
    <scope>NUCLEOTIDE SEQUENCE [LARGE SCALE GENOMIC DNA]</scope>
    <source>
        <strain>CFT073 / ATCC 700928 / UPEC</strain>
    </source>
</reference>
<dbReference type="EMBL" id="AE014075">
    <property type="protein sequence ID" value="AAN81743.1"/>
    <property type="molecule type" value="Genomic_DNA"/>
</dbReference>
<dbReference type="RefSeq" id="WP_000103863.1">
    <property type="nucleotide sequence ID" value="NZ_CP051263.1"/>
</dbReference>
<dbReference type="SMR" id="Q8FEL3"/>
<dbReference type="STRING" id="199310.c3294"/>
<dbReference type="KEGG" id="ecc:c3294"/>
<dbReference type="eggNOG" id="COG0249">
    <property type="taxonomic scope" value="Bacteria"/>
</dbReference>
<dbReference type="HOGENOM" id="CLU_002472_4_0_6"/>
<dbReference type="BioCyc" id="ECOL199310:C3294-MONOMER"/>
<dbReference type="Proteomes" id="UP000001410">
    <property type="component" value="Chromosome"/>
</dbReference>
<dbReference type="GO" id="GO:0005829">
    <property type="term" value="C:cytosol"/>
    <property type="evidence" value="ECO:0007669"/>
    <property type="project" value="TreeGrafter"/>
</dbReference>
<dbReference type="GO" id="GO:0005524">
    <property type="term" value="F:ATP binding"/>
    <property type="evidence" value="ECO:0007669"/>
    <property type="project" value="UniProtKB-UniRule"/>
</dbReference>
<dbReference type="GO" id="GO:0140664">
    <property type="term" value="F:ATP-dependent DNA damage sensor activity"/>
    <property type="evidence" value="ECO:0007669"/>
    <property type="project" value="InterPro"/>
</dbReference>
<dbReference type="GO" id="GO:0003684">
    <property type="term" value="F:damaged DNA binding"/>
    <property type="evidence" value="ECO:0007669"/>
    <property type="project" value="UniProtKB-UniRule"/>
</dbReference>
<dbReference type="GO" id="GO:0030983">
    <property type="term" value="F:mismatched DNA binding"/>
    <property type="evidence" value="ECO:0007669"/>
    <property type="project" value="InterPro"/>
</dbReference>
<dbReference type="GO" id="GO:0006298">
    <property type="term" value="P:mismatch repair"/>
    <property type="evidence" value="ECO:0007669"/>
    <property type="project" value="UniProtKB-UniRule"/>
</dbReference>
<dbReference type="CDD" id="cd03284">
    <property type="entry name" value="ABC_MutS1"/>
    <property type="match status" value="1"/>
</dbReference>
<dbReference type="FunFam" id="1.10.1420.10:FF:000002">
    <property type="entry name" value="DNA mismatch repair protein MutS"/>
    <property type="match status" value="1"/>
</dbReference>
<dbReference type="FunFam" id="3.30.420.110:FF:000001">
    <property type="entry name" value="DNA mismatch repair protein MutS"/>
    <property type="match status" value="1"/>
</dbReference>
<dbReference type="FunFam" id="3.40.1170.10:FF:000001">
    <property type="entry name" value="DNA mismatch repair protein MutS"/>
    <property type="match status" value="1"/>
</dbReference>
<dbReference type="FunFam" id="3.40.50.300:FF:000283">
    <property type="entry name" value="DNA mismatch repair protein MutS"/>
    <property type="match status" value="1"/>
</dbReference>
<dbReference type="Gene3D" id="1.10.1420.10">
    <property type="match status" value="2"/>
</dbReference>
<dbReference type="Gene3D" id="6.10.140.430">
    <property type="match status" value="1"/>
</dbReference>
<dbReference type="Gene3D" id="3.40.1170.10">
    <property type="entry name" value="DNA repair protein MutS, domain I"/>
    <property type="match status" value="1"/>
</dbReference>
<dbReference type="Gene3D" id="3.30.420.110">
    <property type="entry name" value="MutS, connector domain"/>
    <property type="match status" value="1"/>
</dbReference>
<dbReference type="Gene3D" id="3.40.50.300">
    <property type="entry name" value="P-loop containing nucleotide triphosphate hydrolases"/>
    <property type="match status" value="1"/>
</dbReference>
<dbReference type="HAMAP" id="MF_00096">
    <property type="entry name" value="MutS"/>
    <property type="match status" value="1"/>
</dbReference>
<dbReference type="InterPro" id="IPR005748">
    <property type="entry name" value="DNA_mismatch_repair_MutS"/>
</dbReference>
<dbReference type="InterPro" id="IPR007695">
    <property type="entry name" value="DNA_mismatch_repair_MutS-lik_N"/>
</dbReference>
<dbReference type="InterPro" id="IPR017261">
    <property type="entry name" value="DNA_mismatch_repair_MutS/MSH"/>
</dbReference>
<dbReference type="InterPro" id="IPR000432">
    <property type="entry name" value="DNA_mismatch_repair_MutS_C"/>
</dbReference>
<dbReference type="InterPro" id="IPR007861">
    <property type="entry name" value="DNA_mismatch_repair_MutS_clamp"/>
</dbReference>
<dbReference type="InterPro" id="IPR007696">
    <property type="entry name" value="DNA_mismatch_repair_MutS_core"/>
</dbReference>
<dbReference type="InterPro" id="IPR016151">
    <property type="entry name" value="DNA_mismatch_repair_MutS_N"/>
</dbReference>
<dbReference type="InterPro" id="IPR036187">
    <property type="entry name" value="DNA_mismatch_repair_MutS_sf"/>
</dbReference>
<dbReference type="InterPro" id="IPR007860">
    <property type="entry name" value="DNA_mmatch_repair_MutS_con_dom"/>
</dbReference>
<dbReference type="InterPro" id="IPR045076">
    <property type="entry name" value="MutS"/>
</dbReference>
<dbReference type="InterPro" id="IPR036678">
    <property type="entry name" value="MutS_con_dom_sf"/>
</dbReference>
<dbReference type="InterPro" id="IPR027417">
    <property type="entry name" value="P-loop_NTPase"/>
</dbReference>
<dbReference type="NCBIfam" id="TIGR01070">
    <property type="entry name" value="mutS1"/>
    <property type="match status" value="1"/>
</dbReference>
<dbReference type="NCBIfam" id="NF003810">
    <property type="entry name" value="PRK05399.1"/>
    <property type="match status" value="1"/>
</dbReference>
<dbReference type="PANTHER" id="PTHR11361:SF34">
    <property type="entry name" value="DNA MISMATCH REPAIR PROTEIN MSH1, MITOCHONDRIAL"/>
    <property type="match status" value="1"/>
</dbReference>
<dbReference type="PANTHER" id="PTHR11361">
    <property type="entry name" value="DNA MISMATCH REPAIR PROTEIN MUTS FAMILY MEMBER"/>
    <property type="match status" value="1"/>
</dbReference>
<dbReference type="Pfam" id="PF01624">
    <property type="entry name" value="MutS_I"/>
    <property type="match status" value="1"/>
</dbReference>
<dbReference type="Pfam" id="PF05188">
    <property type="entry name" value="MutS_II"/>
    <property type="match status" value="1"/>
</dbReference>
<dbReference type="Pfam" id="PF05192">
    <property type="entry name" value="MutS_III"/>
    <property type="match status" value="1"/>
</dbReference>
<dbReference type="Pfam" id="PF05190">
    <property type="entry name" value="MutS_IV"/>
    <property type="match status" value="1"/>
</dbReference>
<dbReference type="Pfam" id="PF00488">
    <property type="entry name" value="MutS_V"/>
    <property type="match status" value="1"/>
</dbReference>
<dbReference type="PIRSF" id="PIRSF037677">
    <property type="entry name" value="DNA_mis_repair_Msh6"/>
    <property type="match status" value="1"/>
</dbReference>
<dbReference type="SMART" id="SM00534">
    <property type="entry name" value="MUTSac"/>
    <property type="match status" value="1"/>
</dbReference>
<dbReference type="SMART" id="SM00533">
    <property type="entry name" value="MUTSd"/>
    <property type="match status" value="1"/>
</dbReference>
<dbReference type="SUPFAM" id="SSF55271">
    <property type="entry name" value="DNA repair protein MutS, domain I"/>
    <property type="match status" value="1"/>
</dbReference>
<dbReference type="SUPFAM" id="SSF53150">
    <property type="entry name" value="DNA repair protein MutS, domain II"/>
    <property type="match status" value="1"/>
</dbReference>
<dbReference type="SUPFAM" id="SSF48334">
    <property type="entry name" value="DNA repair protein MutS, domain III"/>
    <property type="match status" value="1"/>
</dbReference>
<dbReference type="SUPFAM" id="SSF52540">
    <property type="entry name" value="P-loop containing nucleoside triphosphate hydrolases"/>
    <property type="match status" value="1"/>
</dbReference>
<dbReference type="PROSITE" id="PS00486">
    <property type="entry name" value="DNA_MISMATCH_REPAIR_2"/>
    <property type="match status" value="1"/>
</dbReference>
<accession>Q8FEL3</accession>
<name>MUTS_ECOL6</name>
<organism>
    <name type="scientific">Escherichia coli O6:H1 (strain CFT073 / ATCC 700928 / UPEC)</name>
    <dbReference type="NCBI Taxonomy" id="199310"/>
    <lineage>
        <taxon>Bacteria</taxon>
        <taxon>Pseudomonadati</taxon>
        <taxon>Pseudomonadota</taxon>
        <taxon>Gammaproteobacteria</taxon>
        <taxon>Enterobacterales</taxon>
        <taxon>Enterobacteriaceae</taxon>
        <taxon>Escherichia</taxon>
    </lineage>
</organism>